<proteinExistence type="inferred from homology"/>
<organism>
    <name type="scientific">Thermococcus kodakarensis (strain ATCC BAA-918 / JCM 12380 / KOD1)</name>
    <name type="common">Pyrococcus kodakaraensis (strain KOD1)</name>
    <dbReference type="NCBI Taxonomy" id="69014"/>
    <lineage>
        <taxon>Archaea</taxon>
        <taxon>Methanobacteriati</taxon>
        <taxon>Methanobacteriota</taxon>
        <taxon>Thermococci</taxon>
        <taxon>Thermococcales</taxon>
        <taxon>Thermococcaceae</taxon>
        <taxon>Thermococcus</taxon>
    </lineage>
</organism>
<reference key="1">
    <citation type="journal article" date="2005" name="Genome Res.">
        <title>Complete genome sequence of the hyperthermophilic archaeon Thermococcus kodakaraensis KOD1 and comparison with Pyrococcus genomes.</title>
        <authorList>
            <person name="Fukui T."/>
            <person name="Atomi H."/>
            <person name="Kanai T."/>
            <person name="Matsumi R."/>
            <person name="Fujiwara S."/>
            <person name="Imanaka T."/>
        </authorList>
    </citation>
    <scope>NUCLEOTIDE SEQUENCE [LARGE SCALE GENOMIC DNA]</scope>
    <source>
        <strain>ATCC BAA-918 / JCM 12380 / KOD1</strain>
    </source>
</reference>
<protein>
    <recommendedName>
        <fullName evidence="1">tRNA(Phe) 7-((3-amino-3-carboxypropyl)-4-demethylwyosine(37)-N(4))-methyltransferase 1</fullName>
        <ecNumber evidence="1">2.1.1.282</ecNumber>
    </recommendedName>
    <alternativeName>
        <fullName evidence="1">tRNA wyosine derivatives biosynthesis protein Taw3 1</fullName>
    </alternativeName>
</protein>
<sequence length="198" mass="22932">MFLYTENFDEQKEKAMEGLRKALEEDKVDHDIIPLLEKINALQNYFTTSSCSGRISVMEMPHFGDKVNSVWLGKWHREVRLEEVLEAVGKHRSGQLWFLVRSPILHVGARTLEDAVRLLNLAIGLGFKYSNIKSVSHKKLVVEIRSTERMDVPLGENGELWVDEAYIEKIVNLANAQVRRFKGKLKRLEEEIEKLQED</sequence>
<accession>Q5JFK6</accession>
<feature type="chain" id="PRO_0000157097" description="tRNA(Phe) 7-((3-amino-3-carboxypropyl)-4-demethylwyosine(37)-N(4))-methyltransferase 1">
    <location>
        <begin position="1"/>
        <end position="198"/>
    </location>
</feature>
<keyword id="KW-0489">Methyltransferase</keyword>
<keyword id="KW-1185">Reference proteome</keyword>
<keyword id="KW-0949">S-adenosyl-L-methionine</keyword>
<keyword id="KW-0808">Transferase</keyword>
<keyword id="KW-0819">tRNA processing</keyword>
<evidence type="ECO:0000255" key="1">
    <source>
        <dbReference type="HAMAP-Rule" id="MF_00266"/>
    </source>
</evidence>
<comment type="function">
    <text evidence="1">S-adenosyl-L-methionine-dependent methyltransferase that acts as a component of the wyosine derivatives biosynthesis pathway. Probably methylates N-4 position of wybutosine-86 to produce wybutosine-72.</text>
</comment>
<comment type="catalytic activity">
    <reaction evidence="1">
        <text>4-demethyl-7-[(3S)-3-amino-3-carboxypropyl]wyosine(37) in tRNA(Phe) + S-adenosyl-L-methionine = 7-[(3S)-3-amino-3-carboxypropyl]wyosine(37) in tRNA(Phe) + S-adenosyl-L-homocysteine + H(+)</text>
        <dbReference type="Rhea" id="RHEA:36635"/>
        <dbReference type="Rhea" id="RHEA-COMP:10378"/>
        <dbReference type="Rhea" id="RHEA-COMP:10379"/>
        <dbReference type="ChEBI" id="CHEBI:15378"/>
        <dbReference type="ChEBI" id="CHEBI:57856"/>
        <dbReference type="ChEBI" id="CHEBI:59789"/>
        <dbReference type="ChEBI" id="CHEBI:73543"/>
        <dbReference type="ChEBI" id="CHEBI:73550"/>
        <dbReference type="EC" id="2.1.1.282"/>
    </reaction>
</comment>
<comment type="similarity">
    <text evidence="1">Belongs to the TYW3 family.</text>
</comment>
<gene>
    <name evidence="1" type="primary">taw3-1</name>
    <name type="ordered locus">TK0175</name>
</gene>
<name>TYW31_THEKO</name>
<dbReference type="EC" id="2.1.1.282" evidence="1"/>
<dbReference type="EMBL" id="AP006878">
    <property type="protein sequence ID" value="BAD84364.1"/>
    <property type="molecule type" value="Genomic_DNA"/>
</dbReference>
<dbReference type="RefSeq" id="WP_011249130.1">
    <property type="nucleotide sequence ID" value="NC_006624.1"/>
</dbReference>
<dbReference type="SMR" id="Q5JFK6"/>
<dbReference type="FunCoup" id="Q5JFK6">
    <property type="interactions" value="76"/>
</dbReference>
<dbReference type="STRING" id="69014.TK0175"/>
<dbReference type="EnsemblBacteria" id="BAD84364">
    <property type="protein sequence ID" value="BAD84364"/>
    <property type="gene ID" value="TK0175"/>
</dbReference>
<dbReference type="GeneID" id="78446679"/>
<dbReference type="KEGG" id="tko:TK0175"/>
<dbReference type="PATRIC" id="fig|69014.16.peg.175"/>
<dbReference type="eggNOG" id="arCOG04156">
    <property type="taxonomic scope" value="Archaea"/>
</dbReference>
<dbReference type="HOGENOM" id="CLU_047426_2_0_2"/>
<dbReference type="InParanoid" id="Q5JFK6"/>
<dbReference type="OrthoDB" id="19299at2157"/>
<dbReference type="PhylomeDB" id="Q5JFK6"/>
<dbReference type="Proteomes" id="UP000000536">
    <property type="component" value="Chromosome"/>
</dbReference>
<dbReference type="GO" id="GO:0008175">
    <property type="term" value="F:tRNA methyltransferase activity"/>
    <property type="evidence" value="ECO:0007669"/>
    <property type="project" value="InterPro"/>
</dbReference>
<dbReference type="GO" id="GO:0030488">
    <property type="term" value="P:tRNA methylation"/>
    <property type="evidence" value="ECO:0007669"/>
    <property type="project" value="InterPro"/>
</dbReference>
<dbReference type="GO" id="GO:0031591">
    <property type="term" value="P:wybutosine biosynthetic process"/>
    <property type="evidence" value="ECO:0007669"/>
    <property type="project" value="InterPro"/>
</dbReference>
<dbReference type="FunFam" id="3.30.1960.10:FF:000010">
    <property type="entry name" value="tRNA(Phe) 7-((3-amino-3-carboxypropyl)-4-demethylwyosine(37)-N(4))-methyltransferase 1"/>
    <property type="match status" value="1"/>
</dbReference>
<dbReference type="Gene3D" id="3.30.1960.10">
    <property type="entry name" value="tRNA wybutosine-synthesizing-like"/>
    <property type="match status" value="1"/>
</dbReference>
<dbReference type="HAMAP" id="MF_00266">
    <property type="entry name" value="TYW3_archaea"/>
    <property type="match status" value="1"/>
</dbReference>
<dbReference type="InterPro" id="IPR022908">
    <property type="entry name" value="Taw3"/>
</dbReference>
<dbReference type="InterPro" id="IPR003827">
    <property type="entry name" value="tRNA_yW-synthesising"/>
</dbReference>
<dbReference type="InterPro" id="IPR036602">
    <property type="entry name" value="tRNA_yW-synthesising-like_sf"/>
</dbReference>
<dbReference type="NCBIfam" id="NF003266">
    <property type="entry name" value="PRK04235.1-5"/>
    <property type="match status" value="1"/>
</dbReference>
<dbReference type="NCBIfam" id="NF003267">
    <property type="entry name" value="PRK04235.1-6"/>
    <property type="match status" value="1"/>
</dbReference>
<dbReference type="NCBIfam" id="NF047731">
    <property type="entry name" value="tRNAMtaseTaw3"/>
    <property type="match status" value="1"/>
</dbReference>
<dbReference type="PANTHER" id="PTHR48418">
    <property type="entry name" value="TRNA WYBUTOSINE-SYNTHESIZING PROTEIN 3"/>
    <property type="match status" value="1"/>
</dbReference>
<dbReference type="PANTHER" id="PTHR48418:SF1">
    <property type="entry name" value="TRNA WYBUTOSINE-SYNTHESIZING PROTEIN 3"/>
    <property type="match status" value="1"/>
</dbReference>
<dbReference type="Pfam" id="PF02676">
    <property type="entry name" value="TYW3"/>
    <property type="match status" value="1"/>
</dbReference>
<dbReference type="SUPFAM" id="SSF111278">
    <property type="entry name" value="SSo0622-like"/>
    <property type="match status" value="1"/>
</dbReference>